<reference key="1">
    <citation type="journal article" date="1989" name="Cell">
        <title>Progressive determination during formation of the anteroposterior axis in Xenopus laevis.</title>
        <authorList>
            <person name="Sive H.L."/>
            <person name="Hattori K."/>
            <person name="Weintraub H."/>
        </authorList>
    </citation>
    <scope>NUCLEOTIDE SEQUENCE [MRNA]</scope>
    <scope>TISSUE SPECIFICITY</scope>
    <source>
        <tissue>Embryonic head</tissue>
    </source>
</reference>
<reference key="2">
    <citation type="journal article" date="1998" name="Mech. Dev.">
        <title>Anterior specification of embryonic ectoderm: the role of the Xenopus cement gland-specific gene XAG-2.</title>
        <authorList>
            <person name="Aberger F."/>
            <person name="Weidinger G."/>
            <person name="Grunz H."/>
            <person name="Richter K."/>
        </authorList>
    </citation>
    <scope>NUCLEOTIDE SEQUENCE [MRNA]</scope>
    <scope>FUNCTION</scope>
    <scope>SUBCELLULAR LOCATION</scope>
    <scope>TISSUE SPECIFICITY</scope>
    <source>
        <tissue>Neurula</tissue>
    </source>
</reference>
<reference key="3">
    <citation type="submission" date="2004-07" db="EMBL/GenBank/DDBJ databases">
        <authorList>
            <consortium name="NIH - Xenopus Gene Collection (XGC) project"/>
        </authorList>
    </citation>
    <scope>NUCLEOTIDE SEQUENCE [LARGE SCALE MRNA]</scope>
    <source>
        <tissue>Tail bud</tissue>
    </source>
</reference>
<dbReference type="EMBL" id="AF025474">
    <property type="protein sequence ID" value="AAB81968.1"/>
    <property type="molecule type" value="mRNA"/>
</dbReference>
<dbReference type="EMBL" id="U82110">
    <property type="protein sequence ID" value="AAB49974.1"/>
    <property type="molecule type" value="mRNA"/>
</dbReference>
<dbReference type="EMBL" id="BC078083">
    <property type="protein sequence ID" value="AAH78083.1"/>
    <property type="molecule type" value="mRNA"/>
</dbReference>
<dbReference type="RefSeq" id="NP_001081669.1">
    <property type="nucleotide sequence ID" value="NM_001088200.1"/>
</dbReference>
<dbReference type="SMR" id="P55869"/>
<dbReference type="DNASU" id="397989"/>
<dbReference type="GeneID" id="397989"/>
<dbReference type="KEGG" id="xla:397989"/>
<dbReference type="AGR" id="Xenbase:XB-GENE-6252140"/>
<dbReference type="CTD" id="397989"/>
<dbReference type="Xenbase" id="XB-GENE-6252140">
    <property type="gene designation" value="ag1.S"/>
</dbReference>
<dbReference type="OMA" id="EDIEWAQ"/>
<dbReference type="OrthoDB" id="262308at2759"/>
<dbReference type="Proteomes" id="UP000186698">
    <property type="component" value="Chromosome 9_10S"/>
</dbReference>
<dbReference type="Bgee" id="397989">
    <property type="expression patterns" value="Expressed in neurula embryo and 9 other cell types or tissues"/>
</dbReference>
<dbReference type="GO" id="GO:0005783">
    <property type="term" value="C:endoplasmic reticulum"/>
    <property type="evidence" value="ECO:0000318"/>
    <property type="project" value="GO_Central"/>
</dbReference>
<dbReference type="GO" id="GO:0005576">
    <property type="term" value="C:extracellular region"/>
    <property type="evidence" value="ECO:0000314"/>
    <property type="project" value="UniProtKB"/>
</dbReference>
<dbReference type="GO" id="GO:0002162">
    <property type="term" value="F:dystroglycan binding"/>
    <property type="evidence" value="ECO:0000318"/>
    <property type="project" value="GO_Central"/>
</dbReference>
<dbReference type="GO" id="GO:0071570">
    <property type="term" value="P:cement gland development"/>
    <property type="evidence" value="ECO:0000315"/>
    <property type="project" value="UniProtKB"/>
</dbReference>
<dbReference type="GO" id="GO:0008543">
    <property type="term" value="P:fibroblast growth factor receptor signaling pathway"/>
    <property type="evidence" value="ECO:0000315"/>
    <property type="project" value="UniProtKB"/>
</dbReference>
<dbReference type="CDD" id="cd02960">
    <property type="entry name" value="AGR"/>
    <property type="match status" value="1"/>
</dbReference>
<dbReference type="FunFam" id="3.40.30.10:FF:000036">
    <property type="entry name" value="anterior gradient protein 2 homolog"/>
    <property type="match status" value="1"/>
</dbReference>
<dbReference type="Gene3D" id="3.40.30.10">
    <property type="entry name" value="Glutaredoxin"/>
    <property type="match status" value="1"/>
</dbReference>
<dbReference type="InterPro" id="IPR051099">
    <property type="entry name" value="AGR/TXD"/>
</dbReference>
<dbReference type="InterPro" id="IPR036249">
    <property type="entry name" value="Thioredoxin-like_sf"/>
</dbReference>
<dbReference type="PANTHER" id="PTHR15337:SF24">
    <property type="entry name" value="ANTERIOR GRADIENT PROTEIN 1"/>
    <property type="match status" value="1"/>
</dbReference>
<dbReference type="PANTHER" id="PTHR15337">
    <property type="entry name" value="ANTERIOR GRADIENT PROTEIN-RELATED"/>
    <property type="match status" value="1"/>
</dbReference>
<dbReference type="Pfam" id="PF13899">
    <property type="entry name" value="Thioredoxin_7"/>
    <property type="match status" value="1"/>
</dbReference>
<dbReference type="SUPFAM" id="SSF52833">
    <property type="entry name" value="Thioredoxin-like"/>
    <property type="match status" value="1"/>
</dbReference>
<evidence type="ECO:0000255" key="1"/>
<evidence type="ECO:0000256" key="2">
    <source>
        <dbReference type="SAM" id="MobiDB-lite"/>
    </source>
</evidence>
<evidence type="ECO:0000269" key="3">
    <source>
    </source>
</evidence>
<evidence type="ECO:0000269" key="4">
    <source>
    </source>
</evidence>
<evidence type="ECO:0000305" key="5"/>
<feature type="signal peptide" evidence="1">
    <location>
        <begin position="1"/>
        <end position="18"/>
    </location>
</feature>
<feature type="chain" id="PRO_0000001043" description="Anterior gradient protein 2">
    <location>
        <begin position="19"/>
        <end position="185"/>
    </location>
</feature>
<feature type="region of interest" description="Disordered" evidence="2">
    <location>
        <begin position="25"/>
        <end position="45"/>
    </location>
</feature>
<feature type="sequence conflict" description="In Ref. 1; AAB49974." evidence="5" ref="1">
    <original>G</original>
    <variation>A</variation>
    <location>
        <position position="30"/>
    </location>
</feature>
<feature type="sequence conflict" description="In Ref. 1; AAB49974." evidence="5" ref="1">
    <original>RV</original>
    <variation>KG</variation>
    <location>
        <begin position="137"/>
        <end position="138"/>
    </location>
</feature>
<organism>
    <name type="scientific">Xenopus laevis</name>
    <name type="common">African clawed frog</name>
    <dbReference type="NCBI Taxonomy" id="8355"/>
    <lineage>
        <taxon>Eukaryota</taxon>
        <taxon>Metazoa</taxon>
        <taxon>Chordata</taxon>
        <taxon>Craniata</taxon>
        <taxon>Vertebrata</taxon>
        <taxon>Euteleostomi</taxon>
        <taxon>Amphibia</taxon>
        <taxon>Batrachia</taxon>
        <taxon>Anura</taxon>
        <taxon>Pipoidea</taxon>
        <taxon>Pipidae</taxon>
        <taxon>Xenopodinae</taxon>
        <taxon>Xenopus</taxon>
        <taxon>Xenopus</taxon>
    </lineage>
</organism>
<accession>P55869</accession>
<accession>O42251</accession>
<gene>
    <name type="primary">ag2</name>
    <name type="synonym">np77</name>
</gene>
<sequence length="185" mass="20499">MQTGLSLACLVLLCSVLGEAALRKPKRQAGATDTNGAAKSEPAPVKTKGLKTLDRGWGEDIEWAQTYEEGLAKARENNKPLMVIHHLEDCPYSIALKKAFVADKMAQKLAQEDFIMLNLVHPVADENQSPDGHYVPRVIFIDPSLTVRSDLKGRYGNKLYAYDADDIPELITNMKKAKSFLKTEL</sequence>
<protein>
    <recommendedName>
        <fullName>Anterior gradient protein 2</fullName>
        <shortName>XAG-2</shortName>
    </recommendedName>
    <alternativeName>
        <fullName>Secreted protein np77</fullName>
    </alternativeName>
</protein>
<proteinExistence type="evidence at transcript level"/>
<comment type="function">
    <text evidence="4">Involved in cement gland formation; probably specifies dorsal ectoderm to acquire an anterior fate such as cement gland and forebrain. Signals via the FGF pathway.</text>
</comment>
<comment type="subcellular location">
    <subcellularLocation>
        <location evidence="4">Secreted</location>
    </subcellularLocation>
</comment>
<comment type="tissue specificity">
    <text evidence="3 4">Expressed in the anterior of the dorsal ectoderm from late gastrula stages onwards. Becomes restricted to the cement gland anlage at the onset of neurulation (stages 13 to 14) and expressed exclusively in the cement gland from stage 18 onwards, with transient expression in the hatching gland during tailbud stages.</text>
</comment>
<comment type="induction">
    <text>In response to organizer-secreted signals and neural inducers.</text>
</comment>
<comment type="similarity">
    <text evidence="5">Belongs to the AGR family.</text>
</comment>
<keyword id="KW-0217">Developmental protein</keyword>
<keyword id="KW-1185">Reference proteome</keyword>
<keyword id="KW-0964">Secreted</keyword>
<keyword id="KW-0732">Signal</keyword>
<name>AG2_XENLA</name>